<feature type="chain" id="PRO_0000239399" description="Polyisoprenoid diphosphate/phosphate phosphohydrolase PLPP6">
    <location>
        <begin position="1"/>
        <end position="288"/>
    </location>
</feature>
<feature type="topological domain" description="Cytoplasmic" evidence="2">
    <location>
        <begin position="1"/>
        <end position="127"/>
    </location>
</feature>
<feature type="transmembrane region" description="Helical" evidence="3">
    <location>
        <begin position="128"/>
        <end position="148"/>
    </location>
</feature>
<feature type="topological domain" description="Lumenal" evidence="2">
    <location>
        <begin position="149"/>
        <end position="161"/>
    </location>
</feature>
<feature type="transmembrane region" description="Helical" evidence="3">
    <location>
        <begin position="162"/>
        <end position="182"/>
    </location>
</feature>
<feature type="topological domain" description="Cytoplasmic" evidence="2">
    <location>
        <begin position="183"/>
        <end position="223"/>
    </location>
</feature>
<feature type="transmembrane region" description="Helical" evidence="3">
    <location>
        <begin position="224"/>
        <end position="244"/>
    </location>
</feature>
<feature type="topological domain" description="Lumenal" evidence="2">
    <location>
        <begin position="245"/>
        <end position="255"/>
    </location>
</feature>
<feature type="transmembrane region" description="Helical" evidence="3">
    <location>
        <begin position="256"/>
        <end position="276"/>
    </location>
</feature>
<feature type="topological domain" description="Cytoplasmic" evidence="2">
    <location>
        <begin position="277"/>
        <end position="288"/>
    </location>
</feature>
<feature type="region of interest" description="Disordered" evidence="4">
    <location>
        <begin position="1"/>
        <end position="82"/>
    </location>
</feature>
<feature type="region of interest" description="Phosphatase sequence motif I" evidence="1">
    <location>
        <begin position="179"/>
        <end position="187"/>
    </location>
</feature>
<feature type="region of interest" description="Phosphatase sequence motif II" evidence="1">
    <location>
        <begin position="206"/>
        <end position="209"/>
    </location>
</feature>
<feature type="region of interest" description="Phosphatase sequence motif III" evidence="1">
    <location>
        <begin position="244"/>
        <end position="255"/>
    </location>
</feature>
<feature type="active site" description="Proton donors" evidence="1">
    <location>
        <position position="209"/>
    </location>
</feature>
<feature type="active site" description="Nucleophile" evidence="1">
    <location>
        <position position="251"/>
    </location>
</feature>
<feature type="site" description="Stabilizes the active site histidine for nucleophilic attack" evidence="1">
    <location>
        <position position="255"/>
    </location>
</feature>
<feature type="splice variant" id="VSP_019222" description="In isoform 2." evidence="5">
    <original>ALVLDVVLVGVLKAVVRRRRPAHN</original>
    <variation>DIPIFFFWTSLSLRRFQCQVYLQP</variation>
    <location>
        <begin position="167"/>
        <end position="190"/>
    </location>
</feature>
<feature type="splice variant" id="VSP_019223" description="In isoform 2." evidence="5">
    <location>
        <begin position="191"/>
        <end position="288"/>
    </location>
</feature>
<feature type="sequence conflict" description="In Ref. 1; CAH68897." evidence="6" ref="1">
    <original>V</original>
    <variation>M</variation>
    <location>
        <position position="200"/>
    </location>
</feature>
<feature type="sequence conflict" description="In Ref. 1; CAH68897." evidence="6" ref="1">
    <original>N</original>
    <variation>T</variation>
    <location>
        <position position="222"/>
    </location>
</feature>
<dbReference type="EC" id="3.1.3.-" evidence="2"/>
<dbReference type="EC" id="3.6.1.-" evidence="2"/>
<dbReference type="EC" id="3.6.1.68" evidence="2"/>
<dbReference type="EMBL" id="BX255937">
    <property type="protein sequence ID" value="CAH68897.1"/>
    <property type="molecule type" value="Genomic_DNA"/>
</dbReference>
<dbReference type="EMBL" id="BX548055">
    <property type="protein sequence ID" value="CAH68942.1"/>
    <property type="molecule type" value="Genomic_DNA"/>
</dbReference>
<dbReference type="EMBL" id="BC095685">
    <property type="protein sequence ID" value="AAH95685.1"/>
    <property type="molecule type" value="mRNA"/>
</dbReference>
<dbReference type="SMR" id="Q5TZ07"/>
<dbReference type="FunCoup" id="Q5TZ07">
    <property type="interactions" value="117"/>
</dbReference>
<dbReference type="STRING" id="7955.ENSDARP00000074783"/>
<dbReference type="PaxDb" id="7955-ENSDARP00000074783"/>
<dbReference type="Ensembl" id="ENSDART00000186381">
    <molecule id="Q5TZ07-1"/>
    <property type="protein sequence ID" value="ENSDARP00000146744"/>
    <property type="gene ID" value="ENSDARG00000109634"/>
</dbReference>
<dbReference type="AGR" id="ZFIN:ZDB-GENE-040724-247"/>
<dbReference type="ZFIN" id="ZDB-GENE-040724-247">
    <property type="gene designation" value="plpp6"/>
</dbReference>
<dbReference type="eggNOG" id="KOG4268">
    <property type="taxonomic scope" value="Eukaryota"/>
</dbReference>
<dbReference type="HOGENOM" id="CLU_122903_0_0_1"/>
<dbReference type="InParanoid" id="Q5TZ07"/>
<dbReference type="OMA" id="GTVYCLY"/>
<dbReference type="PhylomeDB" id="Q5TZ07"/>
<dbReference type="TreeFam" id="TF323272"/>
<dbReference type="Reactome" id="R-DRE-191273">
    <property type="pathway name" value="Cholesterol biosynthesis"/>
</dbReference>
<dbReference type="PRO" id="PR:Q5TZ07"/>
<dbReference type="Proteomes" id="UP000000437">
    <property type="component" value="Unplaced"/>
</dbReference>
<dbReference type="Bgee" id="ENSDARG00000043527">
    <property type="expression patterns" value="Expressed in early embryo and 18 other cell types or tissues"/>
</dbReference>
<dbReference type="ExpressionAtlas" id="Q5TZ07">
    <property type="expression patterns" value="baseline"/>
</dbReference>
<dbReference type="GO" id="GO:0005789">
    <property type="term" value="C:endoplasmic reticulum membrane"/>
    <property type="evidence" value="ECO:0000250"/>
    <property type="project" value="UniProtKB"/>
</dbReference>
<dbReference type="GO" id="GO:0016020">
    <property type="term" value="C:membrane"/>
    <property type="evidence" value="ECO:0000318"/>
    <property type="project" value="GO_Central"/>
</dbReference>
<dbReference type="GO" id="GO:0005637">
    <property type="term" value="C:nuclear inner membrane"/>
    <property type="evidence" value="ECO:0007669"/>
    <property type="project" value="UniProtKB-SubCell"/>
</dbReference>
<dbReference type="GO" id="GO:0031965">
    <property type="term" value="C:nuclear membrane"/>
    <property type="evidence" value="ECO:0000250"/>
    <property type="project" value="UniProtKB"/>
</dbReference>
<dbReference type="GO" id="GO:0042392">
    <property type="term" value="F:sphingosine-1-phosphate phosphatase activity"/>
    <property type="evidence" value="ECO:0000318"/>
    <property type="project" value="GO_Central"/>
</dbReference>
<dbReference type="GO" id="GO:0045339">
    <property type="term" value="P:farnesyl diphosphate catabolic process"/>
    <property type="evidence" value="ECO:0000250"/>
    <property type="project" value="UniProtKB"/>
</dbReference>
<dbReference type="GO" id="GO:0033383">
    <property type="term" value="P:geranyl diphosphate metabolic process"/>
    <property type="evidence" value="ECO:0000250"/>
    <property type="project" value="UniProtKB"/>
</dbReference>
<dbReference type="GO" id="GO:1902247">
    <property type="term" value="P:geranylgeranyl diphosphate catabolic process"/>
    <property type="evidence" value="ECO:0000250"/>
    <property type="project" value="UniProtKB"/>
</dbReference>
<dbReference type="GO" id="GO:0046839">
    <property type="term" value="P:phospholipid dephosphorylation"/>
    <property type="evidence" value="ECO:0000318"/>
    <property type="project" value="GO_Central"/>
</dbReference>
<dbReference type="GO" id="GO:0018342">
    <property type="term" value="P:protein prenylation"/>
    <property type="evidence" value="ECO:0000250"/>
    <property type="project" value="UniProtKB"/>
</dbReference>
<dbReference type="CDD" id="cd03391">
    <property type="entry name" value="PAP2_containing_2_like"/>
    <property type="match status" value="1"/>
</dbReference>
<dbReference type="Gene3D" id="1.20.144.10">
    <property type="entry name" value="Phosphatidic acid phosphatase type 2/haloperoxidase"/>
    <property type="match status" value="1"/>
</dbReference>
<dbReference type="InterPro" id="IPR036938">
    <property type="entry name" value="P_Acid_Pase_2/haloperoxi_sf"/>
</dbReference>
<dbReference type="InterPro" id="IPR000326">
    <property type="entry name" value="P_Acid_Pase_2/haloperoxidase"/>
</dbReference>
<dbReference type="PANTHER" id="PTHR14969:SF18">
    <property type="entry name" value="POLYISOPRENOID DIPHOSPHATE_PHOSPHATE PHOSPHOHYDROLASE PLPP6"/>
    <property type="match status" value="1"/>
</dbReference>
<dbReference type="PANTHER" id="PTHR14969">
    <property type="entry name" value="SPHINGOSINE-1-PHOSPHATE PHOSPHOHYDROLASE"/>
    <property type="match status" value="1"/>
</dbReference>
<dbReference type="Pfam" id="PF01569">
    <property type="entry name" value="PAP2"/>
    <property type="match status" value="1"/>
</dbReference>
<dbReference type="SMART" id="SM00014">
    <property type="entry name" value="acidPPc"/>
    <property type="match status" value="1"/>
</dbReference>
<dbReference type="SUPFAM" id="SSF48317">
    <property type="entry name" value="Acid phosphatase/Vanadium-dependent haloperoxidase"/>
    <property type="match status" value="1"/>
</dbReference>
<accession>Q5TZ07</accession>
<accession>Q502I4</accession>
<accession>Q5TZD1</accession>
<organism>
    <name type="scientific">Danio rerio</name>
    <name type="common">Zebrafish</name>
    <name type="synonym">Brachydanio rerio</name>
    <dbReference type="NCBI Taxonomy" id="7955"/>
    <lineage>
        <taxon>Eukaryota</taxon>
        <taxon>Metazoa</taxon>
        <taxon>Chordata</taxon>
        <taxon>Craniata</taxon>
        <taxon>Vertebrata</taxon>
        <taxon>Euteleostomi</taxon>
        <taxon>Actinopterygii</taxon>
        <taxon>Neopterygii</taxon>
        <taxon>Teleostei</taxon>
        <taxon>Ostariophysi</taxon>
        <taxon>Cypriniformes</taxon>
        <taxon>Danionidae</taxon>
        <taxon>Danioninae</taxon>
        <taxon>Danio</taxon>
    </lineage>
</organism>
<keyword id="KW-0025">Alternative splicing</keyword>
<keyword id="KW-0256">Endoplasmic reticulum</keyword>
<keyword id="KW-0378">Hydrolase</keyword>
<keyword id="KW-0443">Lipid metabolism</keyword>
<keyword id="KW-0472">Membrane</keyword>
<keyword id="KW-0539">Nucleus</keyword>
<keyword id="KW-1185">Reference proteome</keyword>
<keyword id="KW-0812">Transmembrane</keyword>
<keyword id="KW-1133">Transmembrane helix</keyword>
<name>PLPP6_DANRE</name>
<comment type="function">
    <text evidence="2">Magnesium-independent polyisoprenoid diphosphatase that catalyzes the sequential dephosphorylation of presqualene, farnesyl, geranyl and geranylgeranyl diphosphates. May regulate the biosynthesis of cholesterol and related sterols by dephosphorylating presqualene and farnesyl diphosphate, two key intermediates in this biosynthetic pathway. May also play a role in protein prenylation by acting on farnesyl diphosphate and its derivative geranylgeranyl diphosphate, two precursors for the addition of isoprenoid anchors to membrane proteins. Has a lower activity towards phosphatidic acid (PA), but through phosphatidic acid dephosphorylation may participate in the biosynthesis of phospholipids and triacylglycerols. May also act on ceramide-1-P, lysophosphatidic acid (LPA) and sphing-4-enine 1-phosphate/sphingosine-1-phosphate.</text>
</comment>
<comment type="catalytic activity">
    <reaction evidence="2">
        <text>presqualene diphosphate + H2O = presqualene phosphate + phosphate + H(+)</text>
        <dbReference type="Rhea" id="RHEA:67968"/>
        <dbReference type="ChEBI" id="CHEBI:15377"/>
        <dbReference type="ChEBI" id="CHEBI:15378"/>
        <dbReference type="ChEBI" id="CHEBI:43474"/>
        <dbReference type="ChEBI" id="CHEBI:57310"/>
        <dbReference type="ChEBI" id="CHEBI:176803"/>
    </reaction>
    <physiologicalReaction direction="left-to-right" evidence="2">
        <dbReference type="Rhea" id="RHEA:67969"/>
    </physiologicalReaction>
</comment>
<comment type="catalytic activity">
    <reaction evidence="2">
        <text>presqualene phosphate + H2O = presqualene alcohol + phosphate</text>
        <dbReference type="Rhea" id="RHEA:68024"/>
        <dbReference type="ChEBI" id="CHEBI:15377"/>
        <dbReference type="ChEBI" id="CHEBI:43474"/>
        <dbReference type="ChEBI" id="CHEBI:176803"/>
        <dbReference type="ChEBI" id="CHEBI:176962"/>
    </reaction>
    <physiologicalReaction direction="left-to-right" evidence="2">
        <dbReference type="Rhea" id="RHEA:68025"/>
    </physiologicalReaction>
</comment>
<comment type="catalytic activity">
    <reaction evidence="2">
        <text>(2E,6E)-farnesyl diphosphate + H2O = (2E,6E)-farnesyl phosphate + phosphate + H(+)</text>
        <dbReference type="Rhea" id="RHEA:48128"/>
        <dbReference type="ChEBI" id="CHEBI:15377"/>
        <dbReference type="ChEBI" id="CHEBI:15378"/>
        <dbReference type="ChEBI" id="CHEBI:43474"/>
        <dbReference type="ChEBI" id="CHEBI:88226"/>
        <dbReference type="ChEBI" id="CHEBI:175763"/>
    </reaction>
    <physiologicalReaction direction="left-to-right" evidence="2">
        <dbReference type="Rhea" id="RHEA:48129"/>
    </physiologicalReaction>
</comment>
<comment type="catalytic activity">
    <reaction evidence="2">
        <text>(2E,6E)-farnesyl phosphate + H2O = (2E,6E)-farnesol + phosphate</text>
        <dbReference type="Rhea" id="RHEA:48132"/>
        <dbReference type="ChEBI" id="CHEBI:15377"/>
        <dbReference type="ChEBI" id="CHEBI:16619"/>
        <dbReference type="ChEBI" id="CHEBI:43474"/>
        <dbReference type="ChEBI" id="CHEBI:88226"/>
    </reaction>
    <physiologicalReaction direction="left-to-right" evidence="2">
        <dbReference type="Rhea" id="RHEA:48133"/>
    </physiologicalReaction>
</comment>
<comment type="catalytic activity">
    <reaction evidence="2">
        <text>(2E,6E,10E)-geranylgeranyl diphosphate + H2O = (2E,6E,10E)-geranylgeranyl phosphate + phosphate + H(+)</text>
        <dbReference type="Rhea" id="RHEA:68008"/>
        <dbReference type="ChEBI" id="CHEBI:15377"/>
        <dbReference type="ChEBI" id="CHEBI:15378"/>
        <dbReference type="ChEBI" id="CHEBI:43474"/>
        <dbReference type="ChEBI" id="CHEBI:58756"/>
        <dbReference type="ChEBI" id="CHEBI:144936"/>
    </reaction>
    <physiologicalReaction direction="left-to-right" evidence="2">
        <dbReference type="Rhea" id="RHEA:68009"/>
    </physiologicalReaction>
</comment>
<comment type="catalytic activity">
    <reaction evidence="2">
        <text>(2E,6E,10E)-geranylgeranyl phosphate + H2O = (2E,6E,10E)-geranylgeraniol + phosphate</text>
        <dbReference type="Rhea" id="RHEA:68016"/>
        <dbReference type="ChEBI" id="CHEBI:15377"/>
        <dbReference type="ChEBI" id="CHEBI:43474"/>
        <dbReference type="ChEBI" id="CHEBI:46762"/>
        <dbReference type="ChEBI" id="CHEBI:144936"/>
    </reaction>
    <physiologicalReaction direction="left-to-right" evidence="2">
        <dbReference type="Rhea" id="RHEA:68017"/>
    </physiologicalReaction>
</comment>
<comment type="catalytic activity">
    <reaction evidence="2">
        <text>(2E)-geranyl diphosphate + H2O = (2E)-geranyl phosphate + phosphate + H(+)</text>
        <dbReference type="Rhea" id="RHEA:47944"/>
        <dbReference type="ChEBI" id="CHEBI:15377"/>
        <dbReference type="ChEBI" id="CHEBI:15378"/>
        <dbReference type="ChEBI" id="CHEBI:43474"/>
        <dbReference type="ChEBI" id="CHEBI:58057"/>
        <dbReference type="ChEBI" id="CHEBI:88107"/>
        <dbReference type="EC" id="3.6.1.68"/>
    </reaction>
    <physiologicalReaction direction="left-to-right" evidence="2">
        <dbReference type="Rhea" id="RHEA:47945"/>
    </physiologicalReaction>
</comment>
<comment type="catalytic activity">
    <reaction evidence="2">
        <text>(2E)-geranyl phosphate + H2O = (2E)-geraniol + phosphate</text>
        <dbReference type="Rhea" id="RHEA:68020"/>
        <dbReference type="ChEBI" id="CHEBI:15377"/>
        <dbReference type="ChEBI" id="CHEBI:17447"/>
        <dbReference type="ChEBI" id="CHEBI:43474"/>
        <dbReference type="ChEBI" id="CHEBI:88107"/>
    </reaction>
    <physiologicalReaction direction="left-to-right" evidence="2">
        <dbReference type="Rhea" id="RHEA:68021"/>
    </physiologicalReaction>
</comment>
<comment type="catalytic activity">
    <reaction evidence="2">
        <text>1,2-dihexadecanoyl-sn-glycero-3-phosphate + H2O = 1,2-dihexadecanoyl-sn-glycerol + phosphate</text>
        <dbReference type="Rhea" id="RHEA:43236"/>
        <dbReference type="ChEBI" id="CHEBI:15377"/>
        <dbReference type="ChEBI" id="CHEBI:43474"/>
        <dbReference type="ChEBI" id="CHEBI:72859"/>
        <dbReference type="ChEBI" id="CHEBI:82929"/>
    </reaction>
    <physiologicalReaction direction="left-to-right" evidence="2">
        <dbReference type="Rhea" id="RHEA:43237"/>
    </physiologicalReaction>
</comment>
<comment type="subcellular location">
    <subcellularLocation>
        <location evidence="2">Endoplasmic reticulum membrane</location>
        <topology evidence="2">Multi-pass membrane protein</topology>
    </subcellularLocation>
    <subcellularLocation>
        <location evidence="2">Nucleus envelope</location>
    </subcellularLocation>
    <subcellularLocation>
        <location evidence="2">Nucleus inner membrane</location>
    </subcellularLocation>
</comment>
<comment type="alternative products">
    <event type="alternative splicing"/>
    <isoform>
        <id>Q5TZ07-1</id>
        <name>1</name>
        <sequence type="displayed"/>
    </isoform>
    <isoform>
        <id>Q5TZ07-2</id>
        <name>2</name>
        <sequence type="described" ref="VSP_019222 VSP_019223"/>
    </isoform>
</comment>
<comment type="similarity">
    <text evidence="6">Belongs to the PA-phosphatase related phosphoesterase family.</text>
</comment>
<protein>
    <recommendedName>
        <fullName evidence="6">Polyisoprenoid diphosphate/phosphate phosphohydrolase PLPP6</fullName>
        <ecNumber evidence="2">3.1.3.-</ecNumber>
        <ecNumber evidence="2">3.6.1.-</ecNumber>
        <ecNumber evidence="2">3.6.1.68</ecNumber>
    </recommendedName>
    <alternativeName>
        <fullName>Phosphatidic acid phosphatase type 2 domain-containing protein 2</fullName>
    </alternativeName>
    <alternativeName>
        <fullName evidence="6">Phospholipid phosphatase 6</fullName>
    </alternativeName>
</protein>
<evidence type="ECO:0000250" key="1">
    <source>
        <dbReference type="UniProtKB" id="O34349"/>
    </source>
</evidence>
<evidence type="ECO:0000250" key="2">
    <source>
        <dbReference type="UniProtKB" id="Q8IY26"/>
    </source>
</evidence>
<evidence type="ECO:0000255" key="3"/>
<evidence type="ECO:0000256" key="4">
    <source>
        <dbReference type="SAM" id="MobiDB-lite"/>
    </source>
</evidence>
<evidence type="ECO:0000303" key="5">
    <source ref="2"/>
</evidence>
<evidence type="ECO:0000305" key="6"/>
<gene>
    <name type="primary">plpp6</name>
    <name type="synonym">ppapdc2</name>
    <name type="ORF">si:ch211-191d7.4</name>
    <name type="ORF">si:ch211-246k22.2</name>
    <name type="ORF">zgc:112181</name>
</gene>
<proteinExistence type="evidence at transcript level"/>
<sequence>MPSPKARSGSGRSGSVPCPGGNGRYEFISLNRTPPSPVPPQLLQRQGSDPTTARLRASESPVRRRGSGSSNSSTGGGGQQLPEEDCMRLNPSFFGIALSSLLAIDLWLSKRLGVCACEDSSWGSVRPLMKLIEVSGHGIPWLAGAAYCLYKSDSPAGQEVMLNLLMALVLDVVLVGVLKAVVRRRRPAHNRMDMFATFSVDSYSFPSGHATRAAMCARFLLNHLVLAAPLRVLVLLWATIVGFSRVLLGRHNVTDVAFGFFMGYWQYNLVEMLWLSPVMLQSAIGQLH</sequence>
<reference key="1">
    <citation type="journal article" date="2013" name="Nature">
        <title>The zebrafish reference genome sequence and its relationship to the human genome.</title>
        <authorList>
            <person name="Howe K."/>
            <person name="Clark M.D."/>
            <person name="Torroja C.F."/>
            <person name="Torrance J."/>
            <person name="Berthelot C."/>
            <person name="Muffato M."/>
            <person name="Collins J.E."/>
            <person name="Humphray S."/>
            <person name="McLaren K."/>
            <person name="Matthews L."/>
            <person name="McLaren S."/>
            <person name="Sealy I."/>
            <person name="Caccamo M."/>
            <person name="Churcher C."/>
            <person name="Scott C."/>
            <person name="Barrett J.C."/>
            <person name="Koch R."/>
            <person name="Rauch G.J."/>
            <person name="White S."/>
            <person name="Chow W."/>
            <person name="Kilian B."/>
            <person name="Quintais L.T."/>
            <person name="Guerra-Assuncao J.A."/>
            <person name="Zhou Y."/>
            <person name="Gu Y."/>
            <person name="Yen J."/>
            <person name="Vogel J.H."/>
            <person name="Eyre T."/>
            <person name="Redmond S."/>
            <person name="Banerjee R."/>
            <person name="Chi J."/>
            <person name="Fu B."/>
            <person name="Langley E."/>
            <person name="Maguire S.F."/>
            <person name="Laird G.K."/>
            <person name="Lloyd D."/>
            <person name="Kenyon E."/>
            <person name="Donaldson S."/>
            <person name="Sehra H."/>
            <person name="Almeida-King J."/>
            <person name="Loveland J."/>
            <person name="Trevanion S."/>
            <person name="Jones M."/>
            <person name="Quail M."/>
            <person name="Willey D."/>
            <person name="Hunt A."/>
            <person name="Burton J."/>
            <person name="Sims S."/>
            <person name="McLay K."/>
            <person name="Plumb B."/>
            <person name="Davis J."/>
            <person name="Clee C."/>
            <person name="Oliver K."/>
            <person name="Clark R."/>
            <person name="Riddle C."/>
            <person name="Elliot D."/>
            <person name="Threadgold G."/>
            <person name="Harden G."/>
            <person name="Ware D."/>
            <person name="Begum S."/>
            <person name="Mortimore B."/>
            <person name="Kerry G."/>
            <person name="Heath P."/>
            <person name="Phillimore B."/>
            <person name="Tracey A."/>
            <person name="Corby N."/>
            <person name="Dunn M."/>
            <person name="Johnson C."/>
            <person name="Wood J."/>
            <person name="Clark S."/>
            <person name="Pelan S."/>
            <person name="Griffiths G."/>
            <person name="Smith M."/>
            <person name="Glithero R."/>
            <person name="Howden P."/>
            <person name="Barker N."/>
            <person name="Lloyd C."/>
            <person name="Stevens C."/>
            <person name="Harley J."/>
            <person name="Holt K."/>
            <person name="Panagiotidis G."/>
            <person name="Lovell J."/>
            <person name="Beasley H."/>
            <person name="Henderson C."/>
            <person name="Gordon D."/>
            <person name="Auger K."/>
            <person name="Wright D."/>
            <person name="Collins J."/>
            <person name="Raisen C."/>
            <person name="Dyer L."/>
            <person name="Leung K."/>
            <person name="Robertson L."/>
            <person name="Ambridge K."/>
            <person name="Leongamornlert D."/>
            <person name="McGuire S."/>
            <person name="Gilderthorp R."/>
            <person name="Griffiths C."/>
            <person name="Manthravadi D."/>
            <person name="Nichol S."/>
            <person name="Barker G."/>
            <person name="Whitehead S."/>
            <person name="Kay M."/>
            <person name="Brown J."/>
            <person name="Murnane C."/>
            <person name="Gray E."/>
            <person name="Humphries M."/>
            <person name="Sycamore N."/>
            <person name="Barker D."/>
            <person name="Saunders D."/>
            <person name="Wallis J."/>
            <person name="Babbage A."/>
            <person name="Hammond S."/>
            <person name="Mashreghi-Mohammadi M."/>
            <person name="Barr L."/>
            <person name="Martin S."/>
            <person name="Wray P."/>
            <person name="Ellington A."/>
            <person name="Matthews N."/>
            <person name="Ellwood M."/>
            <person name="Woodmansey R."/>
            <person name="Clark G."/>
            <person name="Cooper J."/>
            <person name="Tromans A."/>
            <person name="Grafham D."/>
            <person name="Skuce C."/>
            <person name="Pandian R."/>
            <person name="Andrews R."/>
            <person name="Harrison E."/>
            <person name="Kimberley A."/>
            <person name="Garnett J."/>
            <person name="Fosker N."/>
            <person name="Hall R."/>
            <person name="Garner P."/>
            <person name="Kelly D."/>
            <person name="Bird C."/>
            <person name="Palmer S."/>
            <person name="Gehring I."/>
            <person name="Berger A."/>
            <person name="Dooley C.M."/>
            <person name="Ersan-Urun Z."/>
            <person name="Eser C."/>
            <person name="Geiger H."/>
            <person name="Geisler M."/>
            <person name="Karotki L."/>
            <person name="Kirn A."/>
            <person name="Konantz J."/>
            <person name="Konantz M."/>
            <person name="Oberlander M."/>
            <person name="Rudolph-Geiger S."/>
            <person name="Teucke M."/>
            <person name="Lanz C."/>
            <person name="Raddatz G."/>
            <person name="Osoegawa K."/>
            <person name="Zhu B."/>
            <person name="Rapp A."/>
            <person name="Widaa S."/>
            <person name="Langford C."/>
            <person name="Yang F."/>
            <person name="Schuster S.C."/>
            <person name="Carter N.P."/>
            <person name="Harrow J."/>
            <person name="Ning Z."/>
            <person name="Herrero J."/>
            <person name="Searle S.M."/>
            <person name="Enright A."/>
            <person name="Geisler R."/>
            <person name="Plasterk R.H."/>
            <person name="Lee C."/>
            <person name="Westerfield M."/>
            <person name="de Jong P.J."/>
            <person name="Zon L.I."/>
            <person name="Postlethwait J.H."/>
            <person name="Nusslein-Volhard C."/>
            <person name="Hubbard T.J."/>
            <person name="Roest Crollius H."/>
            <person name="Rogers J."/>
            <person name="Stemple D.L."/>
        </authorList>
    </citation>
    <scope>NUCLEOTIDE SEQUENCE [LARGE SCALE GENOMIC DNA]</scope>
    <source>
        <strain>Tuebingen</strain>
    </source>
</reference>
<reference key="2">
    <citation type="submission" date="2005-05" db="EMBL/GenBank/DDBJ databases">
        <authorList>
            <consortium name="NIH - Zebrafish Gene Collection (ZGC) project"/>
        </authorList>
    </citation>
    <scope>NUCLEOTIDE SEQUENCE [LARGE SCALE MRNA] (ISOFORM 2)</scope>
    <source>
        <tissue>Embryo</tissue>
    </source>
</reference>